<protein>
    <recommendedName>
        <fullName evidence="1">Cytidylate kinase</fullName>
        <shortName evidence="1">CK</shortName>
        <ecNumber evidence="1">2.7.4.25</ecNumber>
    </recommendedName>
    <alternativeName>
        <fullName evidence="1">Cytidine monophosphate kinase</fullName>
        <shortName evidence="1">CMP kinase</shortName>
    </alternativeName>
</protein>
<evidence type="ECO:0000255" key="1">
    <source>
        <dbReference type="HAMAP-Rule" id="MF_00238"/>
    </source>
</evidence>
<name>KCY_COXBU</name>
<organism>
    <name type="scientific">Coxiella burnetii (strain RSA 493 / Nine Mile phase I)</name>
    <dbReference type="NCBI Taxonomy" id="227377"/>
    <lineage>
        <taxon>Bacteria</taxon>
        <taxon>Pseudomonadati</taxon>
        <taxon>Pseudomonadota</taxon>
        <taxon>Gammaproteobacteria</taxon>
        <taxon>Legionellales</taxon>
        <taxon>Coxiellaceae</taxon>
        <taxon>Coxiella</taxon>
    </lineage>
</organism>
<reference key="1">
    <citation type="journal article" date="2003" name="Proc. Natl. Acad. Sci. U.S.A.">
        <title>Complete genome sequence of the Q-fever pathogen, Coxiella burnetii.</title>
        <authorList>
            <person name="Seshadri R."/>
            <person name="Paulsen I.T."/>
            <person name="Eisen J.A."/>
            <person name="Read T.D."/>
            <person name="Nelson K.E."/>
            <person name="Nelson W.C."/>
            <person name="Ward N.L."/>
            <person name="Tettelin H."/>
            <person name="Davidsen T.M."/>
            <person name="Beanan M.J."/>
            <person name="DeBoy R.T."/>
            <person name="Daugherty S.C."/>
            <person name="Brinkac L.M."/>
            <person name="Madupu R."/>
            <person name="Dodson R.J."/>
            <person name="Khouri H.M."/>
            <person name="Lee K.H."/>
            <person name="Carty H.A."/>
            <person name="Scanlan D."/>
            <person name="Heinzen R.A."/>
            <person name="Thompson H.A."/>
            <person name="Samuel J.E."/>
            <person name="Fraser C.M."/>
            <person name="Heidelberg J.F."/>
        </authorList>
    </citation>
    <scope>NUCLEOTIDE SEQUENCE [LARGE SCALE GENOMIC DNA]</scope>
    <source>
        <strain>RSA 493 / Nine Mile phase I</strain>
    </source>
</reference>
<sequence length="237" mass="26459">MNARQKPAPVITIDGPSGSGKGTIAFRIAQTLNWYLLDSGIIYRAIAWAMAHYKVPLEDSAGLARLLKRVQISIENRILGKKAKISCDGHDITLAIRSEECGALASRASALPIVREAVLQYQRDFRQRPGLVADGRDMGTVVFPDAVLKFYFDADSQQRAYRRYKELQDRGINVSLPDIQEDLEERDRRDITRSISPTKPAEDAVIIDTTHLSIEAVFATVMNHVRQRGLANVANEK</sequence>
<feature type="chain" id="PRO_0000131910" description="Cytidylate kinase">
    <location>
        <begin position="1"/>
        <end position="237"/>
    </location>
</feature>
<feature type="binding site" evidence="1">
    <location>
        <begin position="15"/>
        <end position="23"/>
    </location>
    <ligand>
        <name>ATP</name>
        <dbReference type="ChEBI" id="CHEBI:30616"/>
    </ligand>
</feature>
<gene>
    <name evidence="1" type="primary">cmk</name>
    <name type="ordered locus">CBU_0527</name>
</gene>
<dbReference type="EC" id="2.7.4.25" evidence="1"/>
<dbReference type="EMBL" id="AE016828">
    <property type="protein sequence ID" value="AAO90073.1"/>
    <property type="molecule type" value="Genomic_DNA"/>
</dbReference>
<dbReference type="RefSeq" id="NP_819559.1">
    <property type="nucleotide sequence ID" value="NC_002971.4"/>
</dbReference>
<dbReference type="RefSeq" id="WP_005771160.1">
    <property type="nucleotide sequence ID" value="NC_002971.4"/>
</dbReference>
<dbReference type="SMR" id="Q83E10"/>
<dbReference type="STRING" id="227377.CBU_0527"/>
<dbReference type="DNASU" id="1208412"/>
<dbReference type="EnsemblBacteria" id="AAO90073">
    <property type="protein sequence ID" value="AAO90073"/>
    <property type="gene ID" value="CBU_0527"/>
</dbReference>
<dbReference type="GeneID" id="1208412"/>
<dbReference type="KEGG" id="cbu:CBU_0527"/>
<dbReference type="PATRIC" id="fig|227377.7.peg.522"/>
<dbReference type="eggNOG" id="COG0283">
    <property type="taxonomic scope" value="Bacteria"/>
</dbReference>
<dbReference type="HOGENOM" id="CLU_079959_2_0_6"/>
<dbReference type="OrthoDB" id="9807434at2"/>
<dbReference type="Proteomes" id="UP000002671">
    <property type="component" value="Chromosome"/>
</dbReference>
<dbReference type="GO" id="GO:0005829">
    <property type="term" value="C:cytosol"/>
    <property type="evidence" value="ECO:0000318"/>
    <property type="project" value="GO_Central"/>
</dbReference>
<dbReference type="GO" id="GO:0004127">
    <property type="term" value="F:(d)CMP kinase activity"/>
    <property type="evidence" value="ECO:0000318"/>
    <property type="project" value="GO_Central"/>
</dbReference>
<dbReference type="GO" id="GO:0005524">
    <property type="term" value="F:ATP binding"/>
    <property type="evidence" value="ECO:0007669"/>
    <property type="project" value="UniProtKB-UniRule"/>
</dbReference>
<dbReference type="GO" id="GO:0036430">
    <property type="term" value="F:CMP kinase activity"/>
    <property type="evidence" value="ECO:0007669"/>
    <property type="project" value="RHEA"/>
</dbReference>
<dbReference type="GO" id="GO:0036431">
    <property type="term" value="F:dCMP kinase activity"/>
    <property type="evidence" value="ECO:0007669"/>
    <property type="project" value="RHEA"/>
</dbReference>
<dbReference type="GO" id="GO:0015949">
    <property type="term" value="P:nucleobase-containing small molecule interconversion"/>
    <property type="evidence" value="ECO:0000318"/>
    <property type="project" value="GO_Central"/>
</dbReference>
<dbReference type="GO" id="GO:0006220">
    <property type="term" value="P:pyrimidine nucleotide metabolic process"/>
    <property type="evidence" value="ECO:0007669"/>
    <property type="project" value="UniProtKB-UniRule"/>
</dbReference>
<dbReference type="CDD" id="cd02020">
    <property type="entry name" value="CMPK"/>
    <property type="match status" value="1"/>
</dbReference>
<dbReference type="Gene3D" id="3.40.50.300">
    <property type="entry name" value="P-loop containing nucleotide triphosphate hydrolases"/>
    <property type="match status" value="1"/>
</dbReference>
<dbReference type="HAMAP" id="MF_00238">
    <property type="entry name" value="Cytidyl_kinase_type1"/>
    <property type="match status" value="1"/>
</dbReference>
<dbReference type="InterPro" id="IPR003136">
    <property type="entry name" value="Cytidylate_kin"/>
</dbReference>
<dbReference type="InterPro" id="IPR011994">
    <property type="entry name" value="Cytidylate_kinase_dom"/>
</dbReference>
<dbReference type="InterPro" id="IPR027417">
    <property type="entry name" value="P-loop_NTPase"/>
</dbReference>
<dbReference type="NCBIfam" id="TIGR00017">
    <property type="entry name" value="cmk"/>
    <property type="match status" value="1"/>
</dbReference>
<dbReference type="PANTHER" id="PTHR21299:SF2">
    <property type="entry name" value="CYTIDYLATE KINASE"/>
    <property type="match status" value="1"/>
</dbReference>
<dbReference type="PANTHER" id="PTHR21299">
    <property type="entry name" value="CYTIDYLATE KINASE/PANTOATE-BETA-ALANINE LIGASE"/>
    <property type="match status" value="1"/>
</dbReference>
<dbReference type="Pfam" id="PF02224">
    <property type="entry name" value="Cytidylate_kin"/>
    <property type="match status" value="1"/>
</dbReference>
<dbReference type="SUPFAM" id="SSF52540">
    <property type="entry name" value="P-loop containing nucleoside triphosphate hydrolases"/>
    <property type="match status" value="1"/>
</dbReference>
<proteinExistence type="inferred from homology"/>
<keyword id="KW-0067">ATP-binding</keyword>
<keyword id="KW-0963">Cytoplasm</keyword>
<keyword id="KW-0418">Kinase</keyword>
<keyword id="KW-0547">Nucleotide-binding</keyword>
<keyword id="KW-1185">Reference proteome</keyword>
<keyword id="KW-0808">Transferase</keyword>
<accession>Q83E10</accession>
<comment type="catalytic activity">
    <reaction evidence="1">
        <text>CMP + ATP = CDP + ADP</text>
        <dbReference type="Rhea" id="RHEA:11600"/>
        <dbReference type="ChEBI" id="CHEBI:30616"/>
        <dbReference type="ChEBI" id="CHEBI:58069"/>
        <dbReference type="ChEBI" id="CHEBI:60377"/>
        <dbReference type="ChEBI" id="CHEBI:456216"/>
        <dbReference type="EC" id="2.7.4.25"/>
    </reaction>
</comment>
<comment type="catalytic activity">
    <reaction evidence="1">
        <text>dCMP + ATP = dCDP + ADP</text>
        <dbReference type="Rhea" id="RHEA:25094"/>
        <dbReference type="ChEBI" id="CHEBI:30616"/>
        <dbReference type="ChEBI" id="CHEBI:57566"/>
        <dbReference type="ChEBI" id="CHEBI:58593"/>
        <dbReference type="ChEBI" id="CHEBI:456216"/>
        <dbReference type="EC" id="2.7.4.25"/>
    </reaction>
</comment>
<comment type="subcellular location">
    <subcellularLocation>
        <location evidence="1">Cytoplasm</location>
    </subcellularLocation>
</comment>
<comment type="similarity">
    <text evidence="1">Belongs to the cytidylate kinase family. Type 1 subfamily.</text>
</comment>